<name>SYDND_ALBFT</name>
<sequence length="611" mass="68750">MAMRSHYCGLVTDTLLGQTVTLCGWVNRRRDHGGVIFVDIRDREGYVQVVCDPDRADMFKVAEGLRNEFCIQVKGLVRARPEGTVNEGLKSGKIEVLCHELTVLNPSVTPPFQLDDDNLSETTRLTHRVLDLRRPYMQNNLMLRYRVAMEVRKFLDANGFVDIETPMLGKSTPEGARDYLVPSRVHEGHFFALPQSPQLFKQLLMVAGFDRYYQITKCFRDEDLRADRQPEFTQIDIETSFLSEQDIRDLFQEMITTVFKTTLNVDLGEFPVMAYSEAMHRYGSDKPDLRVKLEFTELTDVMTDVDFKVFSGAATMKGGRVVGLRIPGGAREVGGLSRGEIDAYAEFVKIYGAKGLAYIKVNELAKGPGDKALRWPGLQSPIVKNIHDKAIAEVLARTGAQDGDLIFFGADKAKIVNDAIGALRIKIGHSEFGKKNALFEKSWRPMWVVDFPMFEFDEEAQRYTAVHHPFTAPKEGHEDWMVTAPEKCISQGYDMVLNGWEMGGGSVRIHRADVQQKVFDALKISPEEAQDKFGFLLDALQYGAPPHGGLAFGLDRIITLMTGAESIRDVIAFPKTQRAQCLLTQAPSPVDEKQLRELHIRLRTPEPIKAA</sequence>
<protein>
    <recommendedName>
        <fullName evidence="1">Aspartate--tRNA(Asp/Asn) ligase</fullName>
        <ecNumber evidence="1">6.1.1.23</ecNumber>
    </recommendedName>
    <alternativeName>
        <fullName evidence="1">Aspartyl-tRNA synthetase</fullName>
        <shortName evidence="1">AspRS</shortName>
    </alternativeName>
    <alternativeName>
        <fullName evidence="1">Non-discriminating aspartyl-tRNA synthetase</fullName>
        <shortName evidence="1">ND-AspRS</shortName>
    </alternativeName>
</protein>
<comment type="function">
    <text evidence="1">Aspartyl-tRNA synthetase with relaxed tRNA specificity since it is able to aspartylate not only its cognate tRNA(Asp) but also tRNA(Asn). Reaction proceeds in two steps: L-aspartate is first activated by ATP to form Asp-AMP and then transferred to the acceptor end of tRNA(Asp/Asn).</text>
</comment>
<comment type="catalytic activity">
    <reaction evidence="1">
        <text>tRNA(Asx) + L-aspartate + ATP = L-aspartyl-tRNA(Asx) + AMP + diphosphate</text>
        <dbReference type="Rhea" id="RHEA:18349"/>
        <dbReference type="Rhea" id="RHEA-COMP:9710"/>
        <dbReference type="Rhea" id="RHEA-COMP:9711"/>
        <dbReference type="ChEBI" id="CHEBI:29991"/>
        <dbReference type="ChEBI" id="CHEBI:30616"/>
        <dbReference type="ChEBI" id="CHEBI:33019"/>
        <dbReference type="ChEBI" id="CHEBI:78442"/>
        <dbReference type="ChEBI" id="CHEBI:78516"/>
        <dbReference type="ChEBI" id="CHEBI:456215"/>
        <dbReference type="EC" id="6.1.1.23"/>
    </reaction>
</comment>
<comment type="subunit">
    <text evidence="1">Homodimer.</text>
</comment>
<comment type="subcellular location">
    <subcellularLocation>
        <location evidence="1">Cytoplasm</location>
    </subcellularLocation>
</comment>
<comment type="similarity">
    <text evidence="1">Belongs to the class-II aminoacyl-tRNA synthetase family. Type 1 subfamily.</text>
</comment>
<organism>
    <name type="scientific">Albidiferax ferrireducens (strain ATCC BAA-621 / DSM 15236 / T118)</name>
    <name type="common">Rhodoferax ferrireducens</name>
    <dbReference type="NCBI Taxonomy" id="338969"/>
    <lineage>
        <taxon>Bacteria</taxon>
        <taxon>Pseudomonadati</taxon>
        <taxon>Pseudomonadota</taxon>
        <taxon>Betaproteobacteria</taxon>
        <taxon>Burkholderiales</taxon>
        <taxon>Comamonadaceae</taxon>
        <taxon>Rhodoferax</taxon>
    </lineage>
</organism>
<accession>Q21YX2</accession>
<gene>
    <name evidence="1" type="primary">aspS</name>
    <name type="ordered locus">Rfer_1297</name>
</gene>
<reference key="1">
    <citation type="submission" date="2006-02" db="EMBL/GenBank/DDBJ databases">
        <title>Complete sequence of chromosome of Rhodoferax ferrireducens DSM 15236.</title>
        <authorList>
            <person name="Copeland A."/>
            <person name="Lucas S."/>
            <person name="Lapidus A."/>
            <person name="Barry K."/>
            <person name="Detter J.C."/>
            <person name="Glavina del Rio T."/>
            <person name="Hammon N."/>
            <person name="Israni S."/>
            <person name="Pitluck S."/>
            <person name="Brettin T."/>
            <person name="Bruce D."/>
            <person name="Han C."/>
            <person name="Tapia R."/>
            <person name="Gilna P."/>
            <person name="Kiss H."/>
            <person name="Schmutz J."/>
            <person name="Larimer F."/>
            <person name="Land M."/>
            <person name="Kyrpides N."/>
            <person name="Ivanova N."/>
            <person name="Richardson P."/>
        </authorList>
    </citation>
    <scope>NUCLEOTIDE SEQUENCE [LARGE SCALE GENOMIC DNA]</scope>
    <source>
        <strain>ATCC BAA-621 / DSM 15236 / T118</strain>
    </source>
</reference>
<evidence type="ECO:0000255" key="1">
    <source>
        <dbReference type="HAMAP-Rule" id="MF_00044"/>
    </source>
</evidence>
<dbReference type="EC" id="6.1.1.23" evidence="1"/>
<dbReference type="EMBL" id="CP000267">
    <property type="protein sequence ID" value="ABD69031.1"/>
    <property type="molecule type" value="Genomic_DNA"/>
</dbReference>
<dbReference type="RefSeq" id="WP_011463599.1">
    <property type="nucleotide sequence ID" value="NC_007908.1"/>
</dbReference>
<dbReference type="SMR" id="Q21YX2"/>
<dbReference type="STRING" id="338969.Rfer_1297"/>
<dbReference type="KEGG" id="rfr:Rfer_1297"/>
<dbReference type="eggNOG" id="COG0173">
    <property type="taxonomic scope" value="Bacteria"/>
</dbReference>
<dbReference type="HOGENOM" id="CLU_014330_3_2_4"/>
<dbReference type="OrthoDB" id="9802326at2"/>
<dbReference type="Proteomes" id="UP000008332">
    <property type="component" value="Chromosome"/>
</dbReference>
<dbReference type="GO" id="GO:0005737">
    <property type="term" value="C:cytoplasm"/>
    <property type="evidence" value="ECO:0007669"/>
    <property type="project" value="UniProtKB-SubCell"/>
</dbReference>
<dbReference type="GO" id="GO:0004815">
    <property type="term" value="F:aspartate-tRNA ligase activity"/>
    <property type="evidence" value="ECO:0007669"/>
    <property type="project" value="UniProtKB-UniRule"/>
</dbReference>
<dbReference type="GO" id="GO:0050560">
    <property type="term" value="F:aspartate-tRNA(Asn) ligase activity"/>
    <property type="evidence" value="ECO:0007669"/>
    <property type="project" value="UniProtKB-EC"/>
</dbReference>
<dbReference type="GO" id="GO:0005524">
    <property type="term" value="F:ATP binding"/>
    <property type="evidence" value="ECO:0007669"/>
    <property type="project" value="UniProtKB-UniRule"/>
</dbReference>
<dbReference type="GO" id="GO:0003676">
    <property type="term" value="F:nucleic acid binding"/>
    <property type="evidence" value="ECO:0007669"/>
    <property type="project" value="InterPro"/>
</dbReference>
<dbReference type="GO" id="GO:0006422">
    <property type="term" value="P:aspartyl-tRNA aminoacylation"/>
    <property type="evidence" value="ECO:0007669"/>
    <property type="project" value="UniProtKB-UniRule"/>
</dbReference>
<dbReference type="CDD" id="cd00777">
    <property type="entry name" value="AspRS_core"/>
    <property type="match status" value="1"/>
</dbReference>
<dbReference type="CDD" id="cd04317">
    <property type="entry name" value="EcAspRS_like_N"/>
    <property type="match status" value="1"/>
</dbReference>
<dbReference type="Gene3D" id="3.30.930.10">
    <property type="entry name" value="Bira Bifunctional Protein, Domain 2"/>
    <property type="match status" value="1"/>
</dbReference>
<dbReference type="Gene3D" id="3.30.1360.30">
    <property type="entry name" value="GAD-like domain"/>
    <property type="match status" value="1"/>
</dbReference>
<dbReference type="Gene3D" id="2.40.50.140">
    <property type="entry name" value="Nucleic acid-binding proteins"/>
    <property type="match status" value="1"/>
</dbReference>
<dbReference type="HAMAP" id="MF_00044">
    <property type="entry name" value="Asp_tRNA_synth_type1"/>
    <property type="match status" value="1"/>
</dbReference>
<dbReference type="InterPro" id="IPR004364">
    <property type="entry name" value="Aa-tRNA-synt_II"/>
</dbReference>
<dbReference type="InterPro" id="IPR006195">
    <property type="entry name" value="aa-tRNA-synth_II"/>
</dbReference>
<dbReference type="InterPro" id="IPR045864">
    <property type="entry name" value="aa-tRNA-synth_II/BPL/LPL"/>
</dbReference>
<dbReference type="InterPro" id="IPR004524">
    <property type="entry name" value="Asp-tRNA-ligase_1"/>
</dbReference>
<dbReference type="InterPro" id="IPR047089">
    <property type="entry name" value="Asp-tRNA-ligase_1_N"/>
</dbReference>
<dbReference type="InterPro" id="IPR002312">
    <property type="entry name" value="Asp/Asn-tRNA-synth_IIb"/>
</dbReference>
<dbReference type="InterPro" id="IPR047090">
    <property type="entry name" value="AspRS_core"/>
</dbReference>
<dbReference type="InterPro" id="IPR004115">
    <property type="entry name" value="GAD-like_sf"/>
</dbReference>
<dbReference type="InterPro" id="IPR029351">
    <property type="entry name" value="GAD_dom"/>
</dbReference>
<dbReference type="InterPro" id="IPR012340">
    <property type="entry name" value="NA-bd_OB-fold"/>
</dbReference>
<dbReference type="InterPro" id="IPR004365">
    <property type="entry name" value="NA-bd_OB_tRNA"/>
</dbReference>
<dbReference type="NCBIfam" id="TIGR00459">
    <property type="entry name" value="aspS_bact"/>
    <property type="match status" value="1"/>
</dbReference>
<dbReference type="NCBIfam" id="NF001750">
    <property type="entry name" value="PRK00476.1"/>
    <property type="match status" value="1"/>
</dbReference>
<dbReference type="PANTHER" id="PTHR22594:SF5">
    <property type="entry name" value="ASPARTATE--TRNA LIGASE, MITOCHONDRIAL"/>
    <property type="match status" value="1"/>
</dbReference>
<dbReference type="PANTHER" id="PTHR22594">
    <property type="entry name" value="ASPARTYL/LYSYL-TRNA SYNTHETASE"/>
    <property type="match status" value="1"/>
</dbReference>
<dbReference type="Pfam" id="PF02938">
    <property type="entry name" value="GAD"/>
    <property type="match status" value="1"/>
</dbReference>
<dbReference type="Pfam" id="PF00152">
    <property type="entry name" value="tRNA-synt_2"/>
    <property type="match status" value="1"/>
</dbReference>
<dbReference type="Pfam" id="PF01336">
    <property type="entry name" value="tRNA_anti-codon"/>
    <property type="match status" value="1"/>
</dbReference>
<dbReference type="PRINTS" id="PR01042">
    <property type="entry name" value="TRNASYNTHASP"/>
</dbReference>
<dbReference type="SUPFAM" id="SSF55681">
    <property type="entry name" value="Class II aaRS and biotin synthetases"/>
    <property type="match status" value="1"/>
</dbReference>
<dbReference type="SUPFAM" id="SSF55261">
    <property type="entry name" value="GAD domain-like"/>
    <property type="match status" value="1"/>
</dbReference>
<dbReference type="SUPFAM" id="SSF50249">
    <property type="entry name" value="Nucleic acid-binding proteins"/>
    <property type="match status" value="1"/>
</dbReference>
<dbReference type="PROSITE" id="PS50862">
    <property type="entry name" value="AA_TRNA_LIGASE_II"/>
    <property type="match status" value="1"/>
</dbReference>
<feature type="chain" id="PRO_1000006737" description="Aspartate--tRNA(Asp/Asn) ligase">
    <location>
        <begin position="1"/>
        <end position="611"/>
    </location>
</feature>
<feature type="region of interest" description="Aspartate" evidence="1">
    <location>
        <begin position="198"/>
        <end position="201"/>
    </location>
</feature>
<feature type="binding site" evidence="1">
    <location>
        <position position="174"/>
    </location>
    <ligand>
        <name>L-aspartate</name>
        <dbReference type="ChEBI" id="CHEBI:29991"/>
    </ligand>
</feature>
<feature type="binding site" evidence="1">
    <location>
        <begin position="220"/>
        <end position="222"/>
    </location>
    <ligand>
        <name>ATP</name>
        <dbReference type="ChEBI" id="CHEBI:30616"/>
    </ligand>
</feature>
<feature type="binding site" evidence="1">
    <location>
        <position position="220"/>
    </location>
    <ligand>
        <name>L-aspartate</name>
        <dbReference type="ChEBI" id="CHEBI:29991"/>
    </ligand>
</feature>
<feature type="binding site" evidence="1">
    <location>
        <position position="229"/>
    </location>
    <ligand>
        <name>ATP</name>
        <dbReference type="ChEBI" id="CHEBI:30616"/>
    </ligand>
</feature>
<feature type="binding site" evidence="1">
    <location>
        <position position="467"/>
    </location>
    <ligand>
        <name>L-aspartate</name>
        <dbReference type="ChEBI" id="CHEBI:29991"/>
    </ligand>
</feature>
<feature type="binding site" evidence="1">
    <location>
        <position position="501"/>
    </location>
    <ligand>
        <name>ATP</name>
        <dbReference type="ChEBI" id="CHEBI:30616"/>
    </ligand>
</feature>
<feature type="binding site" evidence="1">
    <location>
        <position position="508"/>
    </location>
    <ligand>
        <name>L-aspartate</name>
        <dbReference type="ChEBI" id="CHEBI:29991"/>
    </ligand>
</feature>
<feature type="binding site" evidence="1">
    <location>
        <begin position="553"/>
        <end position="556"/>
    </location>
    <ligand>
        <name>ATP</name>
        <dbReference type="ChEBI" id="CHEBI:30616"/>
    </ligand>
</feature>
<feature type="site" description="Important for tRNA non-discrimination" evidence="1">
    <location>
        <position position="32"/>
    </location>
</feature>
<feature type="site" description="Important for tRNA non-discrimination" evidence="1">
    <location>
        <position position="83"/>
    </location>
</feature>
<proteinExistence type="inferred from homology"/>
<keyword id="KW-0030">Aminoacyl-tRNA synthetase</keyword>
<keyword id="KW-0067">ATP-binding</keyword>
<keyword id="KW-0963">Cytoplasm</keyword>
<keyword id="KW-0436">Ligase</keyword>
<keyword id="KW-0547">Nucleotide-binding</keyword>
<keyword id="KW-0648">Protein biosynthesis</keyword>
<keyword id="KW-1185">Reference proteome</keyword>